<dbReference type="EMBL" id="X90565">
    <property type="status" value="NOT_ANNOTATED_CDS"/>
    <property type="molecule type" value="Genomic_DNA"/>
</dbReference>
<dbReference type="EMBL" id="Z75222">
    <property type="status" value="NOT_ANNOTATED_CDS"/>
    <property type="molecule type" value="Genomic_DNA"/>
</dbReference>
<dbReference type="EMBL" id="Z75223">
    <property type="status" value="NOT_ANNOTATED_CDS"/>
    <property type="molecule type" value="Genomic_DNA"/>
</dbReference>
<dbReference type="STRING" id="4932.YOR314W-A"/>
<dbReference type="PaxDb" id="4932-YOR314W-A"/>
<dbReference type="EnsemblFungi" id="YOR314W-A_mRNA">
    <property type="protein sequence ID" value="YOR314W-A"/>
    <property type="gene ID" value="YOR314W-A"/>
</dbReference>
<dbReference type="AGR" id="SGD:S000007629"/>
<dbReference type="SGD" id="S000007629">
    <property type="gene designation" value="YOR314W-A"/>
</dbReference>
<dbReference type="HOGENOM" id="CLU_3359966_0_0_1"/>
<comment type="caution">
    <text evidence="1">Product of a dubious gene prediction unlikely to encode a functional protein. Because of that it is not part of the S.cerevisiae S288c complete/reference proteome set.</text>
</comment>
<protein>
    <recommendedName>
        <fullName>Putative uncharacterized protein YOR314W-A</fullName>
    </recommendedName>
</protein>
<sequence length="36" mass="4311">MHAHFDRKILNFKPVTVNVIRYCLQFSFKAVTFLLI</sequence>
<gene>
    <name type="ordered locus">YOR314W-A</name>
</gene>
<name>YO14A_YEAST</name>
<organism>
    <name type="scientific">Saccharomyces cerevisiae (strain ATCC 204508 / S288c)</name>
    <name type="common">Baker's yeast</name>
    <dbReference type="NCBI Taxonomy" id="559292"/>
    <lineage>
        <taxon>Eukaryota</taxon>
        <taxon>Fungi</taxon>
        <taxon>Dikarya</taxon>
        <taxon>Ascomycota</taxon>
        <taxon>Saccharomycotina</taxon>
        <taxon>Saccharomycetes</taxon>
        <taxon>Saccharomycetales</taxon>
        <taxon>Saccharomycetaceae</taxon>
        <taxon>Saccharomyces</taxon>
    </lineage>
</organism>
<proteinExistence type="uncertain"/>
<accession>P0C5R0</accession>
<feature type="chain" id="PRO_0000309058" description="Putative uncharacterized protein YOR314W-A">
    <location>
        <begin position="1"/>
        <end position="36"/>
    </location>
</feature>
<reference key="1">
    <citation type="journal article" date="1996" name="Yeast">
        <title>Sequencing of a 35.71 kb DNA segment on the right arm of yeast chromosome XV reveals regions of similarity to chromosomes I and XIII.</title>
        <authorList>
            <person name="Pearson B.M."/>
            <person name="Hernando Y."/>
            <person name="Payne J."/>
            <person name="Wolf S.S."/>
            <person name="Kalogeropoulos A."/>
            <person name="Schweizer M."/>
        </authorList>
    </citation>
    <scope>NUCLEOTIDE SEQUENCE [GENOMIC DNA]</scope>
    <source>
        <strain>ATCC 96604 / S288c / FY1679</strain>
    </source>
</reference>
<reference key="2">
    <citation type="journal article" date="1997" name="Nature">
        <title>The nucleotide sequence of Saccharomyces cerevisiae chromosome XV.</title>
        <authorList>
            <person name="Dujon B."/>
            <person name="Albermann K."/>
            <person name="Aldea M."/>
            <person name="Alexandraki D."/>
            <person name="Ansorge W."/>
            <person name="Arino J."/>
            <person name="Benes V."/>
            <person name="Bohn C."/>
            <person name="Bolotin-Fukuhara M."/>
            <person name="Bordonne R."/>
            <person name="Boyer J."/>
            <person name="Camasses A."/>
            <person name="Casamayor A."/>
            <person name="Casas C."/>
            <person name="Cheret G."/>
            <person name="Cziepluch C."/>
            <person name="Daignan-Fornier B."/>
            <person name="Dang V.-D."/>
            <person name="de Haan M."/>
            <person name="Delius H."/>
            <person name="Durand P."/>
            <person name="Fairhead C."/>
            <person name="Feldmann H."/>
            <person name="Gaillon L."/>
            <person name="Galisson F."/>
            <person name="Gamo F.-J."/>
            <person name="Gancedo C."/>
            <person name="Goffeau A."/>
            <person name="Goulding S.E."/>
            <person name="Grivell L.A."/>
            <person name="Habbig B."/>
            <person name="Hand N.J."/>
            <person name="Hani J."/>
            <person name="Hattenhorst U."/>
            <person name="Hebling U."/>
            <person name="Hernando Y."/>
            <person name="Herrero E."/>
            <person name="Heumann K."/>
            <person name="Hiesel R."/>
            <person name="Hilger F."/>
            <person name="Hofmann B."/>
            <person name="Hollenberg C.P."/>
            <person name="Hughes B."/>
            <person name="Jauniaux J.-C."/>
            <person name="Kalogeropoulos A."/>
            <person name="Katsoulou C."/>
            <person name="Kordes E."/>
            <person name="Lafuente M.J."/>
            <person name="Landt O."/>
            <person name="Louis E.J."/>
            <person name="Maarse A.C."/>
            <person name="Madania A."/>
            <person name="Mannhaupt G."/>
            <person name="Marck C."/>
            <person name="Martin R.P."/>
            <person name="Mewes H.-W."/>
            <person name="Michaux G."/>
            <person name="Paces V."/>
            <person name="Parle-McDermott A.G."/>
            <person name="Pearson B.M."/>
            <person name="Perrin A."/>
            <person name="Pettersson B."/>
            <person name="Poch O."/>
            <person name="Pohl T.M."/>
            <person name="Poirey R."/>
            <person name="Portetelle D."/>
            <person name="Pujol A."/>
            <person name="Purnelle B."/>
            <person name="Ramezani Rad M."/>
            <person name="Rechmann S."/>
            <person name="Schwager C."/>
            <person name="Schweizer M."/>
            <person name="Sor F."/>
            <person name="Sterky F."/>
            <person name="Tarassov I.A."/>
            <person name="Teodoru C."/>
            <person name="Tettelin H."/>
            <person name="Thierry A."/>
            <person name="Tobiasch E."/>
            <person name="Tzermia M."/>
            <person name="Uhlen M."/>
            <person name="Unseld M."/>
            <person name="Valens M."/>
            <person name="Vandenbol M."/>
            <person name="Vetter I."/>
            <person name="Vlcek C."/>
            <person name="Voet M."/>
            <person name="Volckaert G."/>
            <person name="Voss H."/>
            <person name="Wambutt R."/>
            <person name="Wedler H."/>
            <person name="Wiemann S."/>
            <person name="Winsor B."/>
            <person name="Wolfe K.H."/>
            <person name="Zollner A."/>
            <person name="Zumstein E."/>
            <person name="Kleine K."/>
        </authorList>
    </citation>
    <scope>NUCLEOTIDE SEQUENCE [LARGE SCALE GENOMIC DNA]</scope>
    <source>
        <strain>ATCC 204508 / S288c</strain>
    </source>
</reference>
<reference key="3">
    <citation type="journal article" date="2014" name="G3 (Bethesda)">
        <title>The reference genome sequence of Saccharomyces cerevisiae: Then and now.</title>
        <authorList>
            <person name="Engel S.R."/>
            <person name="Dietrich F.S."/>
            <person name="Fisk D.G."/>
            <person name="Binkley G."/>
            <person name="Balakrishnan R."/>
            <person name="Costanzo M.C."/>
            <person name="Dwight S.S."/>
            <person name="Hitz B.C."/>
            <person name="Karra K."/>
            <person name="Nash R.S."/>
            <person name="Weng S."/>
            <person name="Wong E.D."/>
            <person name="Lloyd P."/>
            <person name="Skrzypek M.S."/>
            <person name="Miyasato S.R."/>
            <person name="Simison M."/>
            <person name="Cherry J.M."/>
        </authorList>
    </citation>
    <scope>GENOME REANNOTATION</scope>
    <source>
        <strain>ATCC 204508 / S288c</strain>
    </source>
</reference>
<reference key="4">
    <citation type="journal article" date="2000" name="FEBS Lett.">
        <title>Genomic exploration of the hemiascomycetous yeasts: 4. The genome of Saccharomyces cerevisiae revisited.</title>
        <authorList>
            <person name="Blandin G."/>
            <person name="Durrens P."/>
            <person name="Tekaia F."/>
            <person name="Aigle M."/>
            <person name="Bolotin-Fukuhara M."/>
            <person name="Bon E."/>
            <person name="Casaregola S."/>
            <person name="de Montigny J."/>
            <person name="Gaillardin C."/>
            <person name="Lepingle A."/>
            <person name="Llorente B."/>
            <person name="Malpertuy A."/>
            <person name="Neuveglise C."/>
            <person name="Ozier-Kalogeropoulos O."/>
            <person name="Perrin A."/>
            <person name="Potier S."/>
            <person name="Souciet J.-L."/>
            <person name="Talla E."/>
            <person name="Toffano-Nioche C."/>
            <person name="Wesolowski-Louvel M."/>
            <person name="Marck C."/>
            <person name="Dujon B."/>
        </authorList>
    </citation>
    <scope>GENOME REANNOTATION</scope>
</reference>
<evidence type="ECO:0000305" key="1">
    <source>
    </source>
</evidence>